<reference key="1">
    <citation type="journal article" date="2007" name="J. Bacteriol.">
        <title>The complete genome sequence of Roseobacter denitrificans reveals a mixotrophic rather than photosynthetic metabolism.</title>
        <authorList>
            <person name="Swingley W.D."/>
            <person name="Sadekar S."/>
            <person name="Mastrian S.D."/>
            <person name="Matthies H.J."/>
            <person name="Hao J."/>
            <person name="Ramos H."/>
            <person name="Acharya C.R."/>
            <person name="Conrad A.L."/>
            <person name="Taylor H.L."/>
            <person name="Dejesa L.C."/>
            <person name="Shah M.K."/>
            <person name="O'Huallachain M.E."/>
            <person name="Lince M.T."/>
            <person name="Blankenship R.E."/>
            <person name="Beatty J.T."/>
            <person name="Touchman J.W."/>
        </authorList>
    </citation>
    <scope>NUCLEOTIDE SEQUENCE [LARGE SCALE GENOMIC DNA]</scope>
    <source>
        <strain>ATCC 33942 / OCh 114</strain>
    </source>
</reference>
<evidence type="ECO:0000255" key="1">
    <source>
        <dbReference type="HAMAP-Rule" id="MF_01953"/>
    </source>
</evidence>
<proteinExistence type="inferred from homology"/>
<name>URE1_ROSDO</name>
<keyword id="KW-0963">Cytoplasm</keyword>
<keyword id="KW-0378">Hydrolase</keyword>
<keyword id="KW-0479">Metal-binding</keyword>
<keyword id="KW-0533">Nickel</keyword>
<keyword id="KW-1185">Reference proteome</keyword>
<organism>
    <name type="scientific">Roseobacter denitrificans (strain ATCC 33942 / OCh 114)</name>
    <name type="common">Erythrobacter sp. (strain OCh 114)</name>
    <name type="synonym">Roseobacter denitrificans</name>
    <dbReference type="NCBI Taxonomy" id="375451"/>
    <lineage>
        <taxon>Bacteria</taxon>
        <taxon>Pseudomonadati</taxon>
        <taxon>Pseudomonadota</taxon>
        <taxon>Alphaproteobacteria</taxon>
        <taxon>Rhodobacterales</taxon>
        <taxon>Roseobacteraceae</taxon>
        <taxon>Roseobacter</taxon>
    </lineage>
</organism>
<protein>
    <recommendedName>
        <fullName evidence="1">Urease subunit alpha</fullName>
        <ecNumber evidence="1">3.5.1.5</ecNumber>
    </recommendedName>
    <alternativeName>
        <fullName evidence="1">Urea amidohydrolase subunit alpha</fullName>
    </alternativeName>
</protein>
<dbReference type="EC" id="3.5.1.5" evidence="1"/>
<dbReference type="EMBL" id="CP000362">
    <property type="protein sequence ID" value="ABG33265.1"/>
    <property type="molecule type" value="Genomic_DNA"/>
</dbReference>
<dbReference type="RefSeq" id="WP_011569876.1">
    <property type="nucleotide sequence ID" value="NC_008209.1"/>
</dbReference>
<dbReference type="SMR" id="Q161S8"/>
<dbReference type="STRING" id="375451.RD1_3800"/>
<dbReference type="MEROPS" id="M38.982"/>
<dbReference type="KEGG" id="rde:RD1_3800"/>
<dbReference type="eggNOG" id="COG0804">
    <property type="taxonomic scope" value="Bacteria"/>
</dbReference>
<dbReference type="HOGENOM" id="CLU_000980_0_0_5"/>
<dbReference type="OrthoDB" id="9802793at2"/>
<dbReference type="UniPathway" id="UPA00258">
    <property type="reaction ID" value="UER00370"/>
</dbReference>
<dbReference type="Proteomes" id="UP000007029">
    <property type="component" value="Chromosome"/>
</dbReference>
<dbReference type="GO" id="GO:0005737">
    <property type="term" value="C:cytoplasm"/>
    <property type="evidence" value="ECO:0007669"/>
    <property type="project" value="UniProtKB-SubCell"/>
</dbReference>
<dbReference type="GO" id="GO:0016151">
    <property type="term" value="F:nickel cation binding"/>
    <property type="evidence" value="ECO:0007669"/>
    <property type="project" value="UniProtKB-UniRule"/>
</dbReference>
<dbReference type="GO" id="GO:0009039">
    <property type="term" value="F:urease activity"/>
    <property type="evidence" value="ECO:0007669"/>
    <property type="project" value="UniProtKB-UniRule"/>
</dbReference>
<dbReference type="GO" id="GO:0043419">
    <property type="term" value="P:urea catabolic process"/>
    <property type="evidence" value="ECO:0007669"/>
    <property type="project" value="UniProtKB-UniRule"/>
</dbReference>
<dbReference type="CDD" id="cd00375">
    <property type="entry name" value="Urease_alpha"/>
    <property type="match status" value="1"/>
</dbReference>
<dbReference type="Gene3D" id="3.20.20.140">
    <property type="entry name" value="Metal-dependent hydrolases"/>
    <property type="match status" value="1"/>
</dbReference>
<dbReference type="Gene3D" id="2.30.40.10">
    <property type="entry name" value="Urease, subunit C, domain 1"/>
    <property type="match status" value="1"/>
</dbReference>
<dbReference type="HAMAP" id="MF_01953">
    <property type="entry name" value="Urease_alpha"/>
    <property type="match status" value="1"/>
</dbReference>
<dbReference type="InterPro" id="IPR006680">
    <property type="entry name" value="Amidohydro-rel"/>
</dbReference>
<dbReference type="InterPro" id="IPR011059">
    <property type="entry name" value="Metal-dep_hydrolase_composite"/>
</dbReference>
<dbReference type="InterPro" id="IPR032466">
    <property type="entry name" value="Metal_Hydrolase"/>
</dbReference>
<dbReference type="InterPro" id="IPR011612">
    <property type="entry name" value="Urease_alpha_N_dom"/>
</dbReference>
<dbReference type="InterPro" id="IPR050112">
    <property type="entry name" value="Urease_alpha_subunit"/>
</dbReference>
<dbReference type="InterPro" id="IPR017950">
    <property type="entry name" value="Urease_AS"/>
</dbReference>
<dbReference type="InterPro" id="IPR005848">
    <property type="entry name" value="Urease_asu"/>
</dbReference>
<dbReference type="InterPro" id="IPR017951">
    <property type="entry name" value="Urease_asu_c"/>
</dbReference>
<dbReference type="InterPro" id="IPR029754">
    <property type="entry name" value="Urease_Ni-bd"/>
</dbReference>
<dbReference type="NCBIfam" id="NF009685">
    <property type="entry name" value="PRK13206.1"/>
    <property type="match status" value="1"/>
</dbReference>
<dbReference type="NCBIfam" id="NF009686">
    <property type="entry name" value="PRK13207.1"/>
    <property type="match status" value="1"/>
</dbReference>
<dbReference type="NCBIfam" id="TIGR01792">
    <property type="entry name" value="urease_alph"/>
    <property type="match status" value="1"/>
</dbReference>
<dbReference type="PANTHER" id="PTHR43440">
    <property type="entry name" value="UREASE"/>
    <property type="match status" value="1"/>
</dbReference>
<dbReference type="PANTHER" id="PTHR43440:SF1">
    <property type="entry name" value="UREASE"/>
    <property type="match status" value="1"/>
</dbReference>
<dbReference type="Pfam" id="PF01979">
    <property type="entry name" value="Amidohydro_1"/>
    <property type="match status" value="1"/>
</dbReference>
<dbReference type="Pfam" id="PF00449">
    <property type="entry name" value="Urease_alpha"/>
    <property type="match status" value="1"/>
</dbReference>
<dbReference type="PRINTS" id="PR01752">
    <property type="entry name" value="UREASE"/>
</dbReference>
<dbReference type="SUPFAM" id="SSF51338">
    <property type="entry name" value="Composite domain of metallo-dependent hydrolases"/>
    <property type="match status" value="2"/>
</dbReference>
<dbReference type="SUPFAM" id="SSF51556">
    <property type="entry name" value="Metallo-dependent hydrolases"/>
    <property type="match status" value="1"/>
</dbReference>
<dbReference type="PROSITE" id="PS01120">
    <property type="entry name" value="UREASE_1"/>
    <property type="match status" value="1"/>
</dbReference>
<dbReference type="PROSITE" id="PS00145">
    <property type="entry name" value="UREASE_2"/>
    <property type="match status" value="1"/>
</dbReference>
<dbReference type="PROSITE" id="PS51368">
    <property type="entry name" value="UREASE_3"/>
    <property type="match status" value="1"/>
</dbReference>
<sequence>MPTKIPRTNYAAMFGPTTGDKVRLADTDLIIEVERDHTIYGEEVKFGGGKVIRDGMGQSQVTRAQGAMDTVITNALIVDHTGIYKADVGLRDGRIARIGKAGNPDTQPGVDIIIGPSTEAIAGEGKILTAGGFDSHIHFIAPQQIDDALHSGVTTMLGGGTGPAHGTLATTCTPGSWHIGRMLQALDAFPMNFGISGKGNASQPAALVEMIEGGACAMKLHEDWGTTPGAIDCCLSVADDMDVQVMIHTDTLNESGFVENTVAAIKGRTIHAFHTEGAGGGHAPDIIKICGDANVLPSSTNPTRPFTVNTLEEHLDMLMVCHHLDKSIPEDVAFAESRIRRETIAAEDILHDMGAFSIIASDSQAMGRVGEVIIRTWQTADKMKKQRGALTEETGDNDNMRVRRYIAKYTINPAIAHGIAHEIGSIEVGKRADLCLWNPAFFGVKPEMVLMAGTIVCAQMGDTNASIPTPQPVYSRPMFGAFGRSVERSAVLFVSGAAKSANIGETLGLRKELIAVKGTRGIGKKDLILNDALPHIEVNPETYEVRADGELLTCQPAEVLPMAQRYFLF</sequence>
<feature type="chain" id="PRO_1000070694" description="Urease subunit alpha">
    <location>
        <begin position="1"/>
        <end position="569"/>
    </location>
</feature>
<feature type="domain" description="Urease" evidence="1">
    <location>
        <begin position="131"/>
        <end position="569"/>
    </location>
</feature>
<feature type="active site" description="Proton donor" evidence="1">
    <location>
        <position position="322"/>
    </location>
</feature>
<feature type="binding site" evidence="1">
    <location>
        <position position="136"/>
    </location>
    <ligand>
        <name>Ni(2+)</name>
        <dbReference type="ChEBI" id="CHEBI:49786"/>
        <label>1</label>
    </ligand>
</feature>
<feature type="binding site" evidence="1">
    <location>
        <position position="138"/>
    </location>
    <ligand>
        <name>Ni(2+)</name>
        <dbReference type="ChEBI" id="CHEBI:49786"/>
        <label>1</label>
    </ligand>
</feature>
<feature type="binding site" description="via carbamate group" evidence="1">
    <location>
        <position position="219"/>
    </location>
    <ligand>
        <name>Ni(2+)</name>
        <dbReference type="ChEBI" id="CHEBI:49786"/>
        <label>1</label>
    </ligand>
</feature>
<feature type="binding site" description="via carbamate group" evidence="1">
    <location>
        <position position="219"/>
    </location>
    <ligand>
        <name>Ni(2+)</name>
        <dbReference type="ChEBI" id="CHEBI:49786"/>
        <label>2</label>
    </ligand>
</feature>
<feature type="binding site" evidence="1">
    <location>
        <position position="221"/>
    </location>
    <ligand>
        <name>substrate</name>
    </ligand>
</feature>
<feature type="binding site" evidence="1">
    <location>
        <position position="248"/>
    </location>
    <ligand>
        <name>Ni(2+)</name>
        <dbReference type="ChEBI" id="CHEBI:49786"/>
        <label>2</label>
    </ligand>
</feature>
<feature type="binding site" evidence="1">
    <location>
        <position position="274"/>
    </location>
    <ligand>
        <name>Ni(2+)</name>
        <dbReference type="ChEBI" id="CHEBI:49786"/>
        <label>2</label>
    </ligand>
</feature>
<feature type="binding site" evidence="1">
    <location>
        <position position="362"/>
    </location>
    <ligand>
        <name>Ni(2+)</name>
        <dbReference type="ChEBI" id="CHEBI:49786"/>
        <label>1</label>
    </ligand>
</feature>
<feature type="modified residue" description="N6-carboxylysine" evidence="1">
    <location>
        <position position="219"/>
    </location>
</feature>
<gene>
    <name evidence="1" type="primary">ureC</name>
    <name type="ordered locus">RD1_3800</name>
</gene>
<accession>Q161S8</accession>
<comment type="catalytic activity">
    <reaction evidence="1">
        <text>urea + 2 H2O + H(+) = hydrogencarbonate + 2 NH4(+)</text>
        <dbReference type="Rhea" id="RHEA:20557"/>
        <dbReference type="ChEBI" id="CHEBI:15377"/>
        <dbReference type="ChEBI" id="CHEBI:15378"/>
        <dbReference type="ChEBI" id="CHEBI:16199"/>
        <dbReference type="ChEBI" id="CHEBI:17544"/>
        <dbReference type="ChEBI" id="CHEBI:28938"/>
        <dbReference type="EC" id="3.5.1.5"/>
    </reaction>
</comment>
<comment type="cofactor">
    <cofactor evidence="1">
        <name>Ni cation</name>
        <dbReference type="ChEBI" id="CHEBI:25516"/>
    </cofactor>
    <text evidence="1">Binds 2 nickel ions per subunit.</text>
</comment>
<comment type="pathway">
    <text evidence="1">Nitrogen metabolism; urea degradation; CO(2) and NH(3) from urea (urease route): step 1/1.</text>
</comment>
<comment type="subunit">
    <text evidence="1">Heterotrimer of UreA (gamma), UreB (beta) and UreC (alpha) subunits. Three heterotrimers associate to form the active enzyme.</text>
</comment>
<comment type="subcellular location">
    <subcellularLocation>
        <location evidence="1">Cytoplasm</location>
    </subcellularLocation>
</comment>
<comment type="PTM">
    <text evidence="1">Carboxylation allows a single lysine to coordinate two nickel ions.</text>
</comment>
<comment type="similarity">
    <text evidence="1">Belongs to the metallo-dependent hydrolases superfamily. Urease alpha subunit family.</text>
</comment>